<gene>
    <name evidence="1" type="primary">psbI</name>
    <name type="ordered locus">tsr1074</name>
</gene>
<evidence type="ECO:0000255" key="1">
    <source>
        <dbReference type="HAMAP-Rule" id="MF_01316"/>
    </source>
</evidence>
<evidence type="ECO:0000269" key="2">
    <source>
    </source>
</evidence>
<evidence type="ECO:0000269" key="3">
    <source>
    </source>
</evidence>
<evidence type="ECO:0000269" key="4">
    <source>
    </source>
</evidence>
<evidence type="ECO:0000269" key="5">
    <source>
    </source>
</evidence>
<evidence type="ECO:0000269" key="6">
    <source>
    </source>
</evidence>
<evidence type="ECO:0000269" key="7">
    <source>
    </source>
</evidence>
<evidence type="ECO:0000269" key="8">
    <source>
    </source>
</evidence>
<evidence type="ECO:0000269" key="9">
    <source>
    </source>
</evidence>
<evidence type="ECO:0000269" key="10">
    <source>
    </source>
</evidence>
<evidence type="ECO:0000269" key="11">
    <source>
    </source>
</evidence>
<evidence type="ECO:0000269" key="12">
    <source>
    </source>
</evidence>
<evidence type="ECO:0000269" key="13">
    <source>
    </source>
</evidence>
<evidence type="ECO:0007744" key="14">
    <source>
        <dbReference type="PDB" id="7NHO"/>
    </source>
</evidence>
<evidence type="ECO:0007744" key="15">
    <source>
        <dbReference type="PDB" id="7NHP"/>
    </source>
</evidence>
<evidence type="ECO:0007744" key="16">
    <source>
        <dbReference type="PDB" id="7NHQ"/>
    </source>
</evidence>
<evidence type="ECO:0007829" key="17">
    <source>
        <dbReference type="PDB" id="7YQ2"/>
    </source>
</evidence>
<dbReference type="EMBL" id="AB052849">
    <property type="protein sequence ID" value="BAB20622.1"/>
    <property type="molecule type" value="Genomic_DNA"/>
</dbReference>
<dbReference type="EMBL" id="BA000039">
    <property type="protein sequence ID" value="BAC08627.1"/>
    <property type="molecule type" value="Genomic_DNA"/>
</dbReference>
<dbReference type="RefSeq" id="NP_681865.1">
    <property type="nucleotide sequence ID" value="NC_004113.1"/>
</dbReference>
<dbReference type="RefSeq" id="WP_011056917.1">
    <property type="nucleotide sequence ID" value="NC_004113.1"/>
</dbReference>
<dbReference type="PDB" id="1S5L">
    <property type="method" value="X-ray"/>
    <property type="resolution" value="3.50 A"/>
    <property type="chains" value="I/i=1-38"/>
</dbReference>
<dbReference type="PDB" id="2AXT">
    <property type="method" value="X-ray"/>
    <property type="resolution" value="3.00 A"/>
    <property type="chains" value="I/i=1-38"/>
</dbReference>
<dbReference type="PDB" id="3KZI">
    <property type="method" value="X-ray"/>
    <property type="resolution" value="3.60 A"/>
    <property type="chains" value="I=1-38"/>
</dbReference>
<dbReference type="PDB" id="4FBY">
    <property type="method" value="X-ray"/>
    <property type="resolution" value="6.56 A"/>
    <property type="chains" value="I/a=1-38"/>
</dbReference>
<dbReference type="PDB" id="4IXQ">
    <property type="method" value="X-ray"/>
    <property type="resolution" value="5.70 A"/>
    <property type="chains" value="I/i=1-38"/>
</dbReference>
<dbReference type="PDB" id="4IXR">
    <property type="method" value="X-ray"/>
    <property type="resolution" value="5.90 A"/>
    <property type="chains" value="I/i=1-38"/>
</dbReference>
<dbReference type="PDB" id="4PBU">
    <property type="method" value="X-ray"/>
    <property type="resolution" value="5.00 A"/>
    <property type="chains" value="I/i=1-38"/>
</dbReference>
<dbReference type="PDB" id="4PJ0">
    <property type="method" value="X-ray"/>
    <property type="resolution" value="2.44 A"/>
    <property type="chains" value="I/i=1-38"/>
</dbReference>
<dbReference type="PDB" id="4RVY">
    <property type="method" value="X-ray"/>
    <property type="resolution" value="5.50 A"/>
    <property type="chains" value="I/i=1-38"/>
</dbReference>
<dbReference type="PDB" id="4TNH">
    <property type="method" value="X-ray"/>
    <property type="resolution" value="4.90 A"/>
    <property type="chains" value="I/i=1-38"/>
</dbReference>
<dbReference type="PDB" id="4TNI">
    <property type="method" value="X-ray"/>
    <property type="resolution" value="4.60 A"/>
    <property type="chains" value="I/i=1-38"/>
</dbReference>
<dbReference type="PDB" id="4TNJ">
    <property type="method" value="X-ray"/>
    <property type="resolution" value="4.50 A"/>
    <property type="chains" value="I/i=1-38"/>
</dbReference>
<dbReference type="PDB" id="4TNK">
    <property type="method" value="X-ray"/>
    <property type="resolution" value="5.20 A"/>
    <property type="chains" value="I/i=1-38"/>
</dbReference>
<dbReference type="PDB" id="4V62">
    <property type="method" value="X-ray"/>
    <property type="resolution" value="2.90 A"/>
    <property type="chains" value="AI/BI=1-38"/>
</dbReference>
<dbReference type="PDB" id="4V82">
    <property type="method" value="X-ray"/>
    <property type="resolution" value="3.20 A"/>
    <property type="chains" value="AI/BI=1-38"/>
</dbReference>
<dbReference type="PDB" id="5E79">
    <property type="method" value="X-ray"/>
    <property type="resolution" value="3.50 A"/>
    <property type="chains" value="I/i=1-38"/>
</dbReference>
<dbReference type="PDB" id="5E7C">
    <property type="method" value="X-ray"/>
    <property type="resolution" value="4.50 A"/>
    <property type="chains" value="I/i=1-38"/>
</dbReference>
<dbReference type="PDB" id="5H2F">
    <property type="method" value="X-ray"/>
    <property type="resolution" value="2.20 A"/>
    <property type="chains" value="I/i=1-36"/>
</dbReference>
<dbReference type="PDB" id="5KAF">
    <property type="method" value="X-ray"/>
    <property type="resolution" value="3.00 A"/>
    <property type="chains" value="I/i=2-38"/>
</dbReference>
<dbReference type="PDB" id="5KAI">
    <property type="method" value="X-ray"/>
    <property type="resolution" value="2.80 A"/>
    <property type="chains" value="I/i=2-38"/>
</dbReference>
<dbReference type="PDB" id="5MX2">
    <property type="method" value="X-ray"/>
    <property type="resolution" value="2.20 A"/>
    <property type="chains" value="I/i=1-38"/>
</dbReference>
<dbReference type="PDB" id="5TIS">
    <property type="method" value="X-ray"/>
    <property type="resolution" value="2.25 A"/>
    <property type="chains" value="I/i=1-38"/>
</dbReference>
<dbReference type="PDB" id="5ZZN">
    <property type="method" value="X-ray"/>
    <property type="resolution" value="2.10 A"/>
    <property type="chains" value="I/i=1-37"/>
</dbReference>
<dbReference type="PDB" id="6DHE">
    <property type="method" value="X-ray"/>
    <property type="resolution" value="2.05 A"/>
    <property type="chains" value="I/i=1-36"/>
</dbReference>
<dbReference type="PDB" id="6DHF">
    <property type="method" value="X-ray"/>
    <property type="resolution" value="2.08 A"/>
    <property type="chains" value="I/i=1-36"/>
</dbReference>
<dbReference type="PDB" id="6DHG">
    <property type="method" value="X-ray"/>
    <property type="resolution" value="2.50 A"/>
    <property type="chains" value="I/i=1-36"/>
</dbReference>
<dbReference type="PDB" id="6DHH">
    <property type="method" value="X-ray"/>
    <property type="resolution" value="2.20 A"/>
    <property type="chains" value="I/i=1-36"/>
</dbReference>
<dbReference type="PDB" id="6DHO">
    <property type="method" value="X-ray"/>
    <property type="resolution" value="2.07 A"/>
    <property type="chains" value="I/i=1-36"/>
</dbReference>
<dbReference type="PDB" id="6DHP">
    <property type="method" value="X-ray"/>
    <property type="resolution" value="2.04 A"/>
    <property type="chains" value="I/i=1-36"/>
</dbReference>
<dbReference type="PDB" id="6W1O">
    <property type="method" value="X-ray"/>
    <property type="resolution" value="2.08 A"/>
    <property type="chains" value="I/i=1-38"/>
</dbReference>
<dbReference type="PDB" id="6W1P">
    <property type="method" value="X-ray"/>
    <property type="resolution" value="2.26 A"/>
    <property type="chains" value="I/i=1-38"/>
</dbReference>
<dbReference type="PDB" id="6W1Q">
    <property type="method" value="X-ray"/>
    <property type="resolution" value="2.27 A"/>
    <property type="chains" value="I/i=1-38"/>
</dbReference>
<dbReference type="PDB" id="6W1R">
    <property type="method" value="X-ray"/>
    <property type="resolution" value="2.23 A"/>
    <property type="chains" value="I/i=1-38"/>
</dbReference>
<dbReference type="PDB" id="6W1T">
    <property type="method" value="X-ray"/>
    <property type="resolution" value="2.01 A"/>
    <property type="chains" value="I/i=1-38"/>
</dbReference>
<dbReference type="PDB" id="6W1U">
    <property type="method" value="X-ray"/>
    <property type="resolution" value="2.09 A"/>
    <property type="chains" value="I/i=1-38"/>
</dbReference>
<dbReference type="PDB" id="6W1V">
    <property type="method" value="X-ray"/>
    <property type="resolution" value="2.09 A"/>
    <property type="chains" value="I/i=1-38"/>
</dbReference>
<dbReference type="PDB" id="7NHO">
    <property type="method" value="EM"/>
    <property type="resolution" value="2.66 A"/>
    <property type="chains" value="I=1-38"/>
</dbReference>
<dbReference type="PDB" id="7NHP">
    <property type="method" value="EM"/>
    <property type="resolution" value="2.72 A"/>
    <property type="chains" value="I=1-38"/>
</dbReference>
<dbReference type="PDB" id="7NHQ">
    <property type="method" value="EM"/>
    <property type="resolution" value="2.68 A"/>
    <property type="chains" value="I=1-38"/>
</dbReference>
<dbReference type="PDB" id="7RF1">
    <property type="method" value="X-ray"/>
    <property type="resolution" value="1.89 A"/>
    <property type="chains" value="I/i=1-38"/>
</dbReference>
<dbReference type="PDB" id="7RF2">
    <property type="method" value="X-ray"/>
    <property type="resolution" value="2.08 A"/>
    <property type="chains" value="I/i=1-38"/>
</dbReference>
<dbReference type="PDB" id="7RF3">
    <property type="method" value="X-ray"/>
    <property type="resolution" value="2.26 A"/>
    <property type="chains" value="I/i=1-38"/>
</dbReference>
<dbReference type="PDB" id="7RF4">
    <property type="method" value="X-ray"/>
    <property type="resolution" value="2.27 A"/>
    <property type="chains" value="I/i=1-38"/>
</dbReference>
<dbReference type="PDB" id="7RF5">
    <property type="method" value="X-ray"/>
    <property type="resolution" value="2.23 A"/>
    <property type="chains" value="I/i=1-38"/>
</dbReference>
<dbReference type="PDB" id="7RF6">
    <property type="method" value="X-ray"/>
    <property type="resolution" value="2.01 A"/>
    <property type="chains" value="I/i=1-38"/>
</dbReference>
<dbReference type="PDB" id="7RF7">
    <property type="method" value="X-ray"/>
    <property type="resolution" value="2.09 A"/>
    <property type="chains" value="I/i=1-38"/>
</dbReference>
<dbReference type="PDB" id="7RF8">
    <property type="method" value="X-ray"/>
    <property type="resolution" value="2.09 A"/>
    <property type="chains" value="I/i=1-38"/>
</dbReference>
<dbReference type="PDB" id="7YQ2">
    <property type="method" value="X-ray"/>
    <property type="resolution" value="1.90 A"/>
    <property type="chains" value="I/i=1-38"/>
</dbReference>
<dbReference type="PDB" id="7YQ7">
    <property type="method" value="X-ray"/>
    <property type="resolution" value="1.90 A"/>
    <property type="chains" value="I/i=1-38"/>
</dbReference>
<dbReference type="PDB" id="8EZ5">
    <property type="method" value="X-ray"/>
    <property type="resolution" value="2.09 A"/>
    <property type="chains" value="I/i=1-38"/>
</dbReference>
<dbReference type="PDB" id="8F4C">
    <property type="method" value="X-ray"/>
    <property type="resolution" value="2.00 A"/>
    <property type="chains" value="I/i=1-38"/>
</dbReference>
<dbReference type="PDB" id="8F4D">
    <property type="method" value="X-ray"/>
    <property type="resolution" value="2.15 A"/>
    <property type="chains" value="I/i=1-38"/>
</dbReference>
<dbReference type="PDB" id="8F4E">
    <property type="method" value="X-ray"/>
    <property type="resolution" value="2.09 A"/>
    <property type="chains" value="I/i=1-38"/>
</dbReference>
<dbReference type="PDB" id="8F4F">
    <property type="method" value="X-ray"/>
    <property type="resolution" value="2.03 A"/>
    <property type="chains" value="I/i=1-38"/>
</dbReference>
<dbReference type="PDB" id="8F4G">
    <property type="method" value="X-ray"/>
    <property type="resolution" value="2.03 A"/>
    <property type="chains" value="I/i=1-38"/>
</dbReference>
<dbReference type="PDB" id="8F4H">
    <property type="method" value="X-ray"/>
    <property type="resolution" value="2.10 A"/>
    <property type="chains" value="I/i=1-38"/>
</dbReference>
<dbReference type="PDB" id="8F4I">
    <property type="method" value="X-ray"/>
    <property type="resolution" value="2.00 A"/>
    <property type="chains" value="I/i=1-38"/>
</dbReference>
<dbReference type="PDB" id="8F4J">
    <property type="method" value="X-ray"/>
    <property type="resolution" value="2.00 A"/>
    <property type="chains" value="I/i=1-38"/>
</dbReference>
<dbReference type="PDB" id="8F4K">
    <property type="method" value="X-ray"/>
    <property type="resolution" value="2.16 A"/>
    <property type="chains" value="I/i=1-38"/>
</dbReference>
<dbReference type="PDB" id="9EVX">
    <property type="method" value="EM"/>
    <property type="resolution" value="1.71 A"/>
    <property type="chains" value="I/i=1-38"/>
</dbReference>
<dbReference type="PDBsum" id="1S5L"/>
<dbReference type="PDBsum" id="2AXT"/>
<dbReference type="PDBsum" id="3KZI"/>
<dbReference type="PDBsum" id="4FBY"/>
<dbReference type="PDBsum" id="4IXQ"/>
<dbReference type="PDBsum" id="4IXR"/>
<dbReference type="PDBsum" id="4PBU"/>
<dbReference type="PDBsum" id="4PJ0"/>
<dbReference type="PDBsum" id="4RVY"/>
<dbReference type="PDBsum" id="4TNH"/>
<dbReference type="PDBsum" id="4TNI"/>
<dbReference type="PDBsum" id="4TNJ"/>
<dbReference type="PDBsum" id="4TNK"/>
<dbReference type="PDBsum" id="4V62"/>
<dbReference type="PDBsum" id="4V82"/>
<dbReference type="PDBsum" id="5E79"/>
<dbReference type="PDBsum" id="5E7C"/>
<dbReference type="PDBsum" id="5H2F"/>
<dbReference type="PDBsum" id="5KAF"/>
<dbReference type="PDBsum" id="5KAI"/>
<dbReference type="PDBsum" id="5MX2"/>
<dbReference type="PDBsum" id="5TIS"/>
<dbReference type="PDBsum" id="5ZZN"/>
<dbReference type="PDBsum" id="6DHE"/>
<dbReference type="PDBsum" id="6DHF"/>
<dbReference type="PDBsum" id="6DHG"/>
<dbReference type="PDBsum" id="6DHH"/>
<dbReference type="PDBsum" id="6DHO"/>
<dbReference type="PDBsum" id="6DHP"/>
<dbReference type="PDBsum" id="6W1O"/>
<dbReference type="PDBsum" id="6W1P"/>
<dbReference type="PDBsum" id="6W1Q"/>
<dbReference type="PDBsum" id="6W1R"/>
<dbReference type="PDBsum" id="6W1T"/>
<dbReference type="PDBsum" id="6W1U"/>
<dbReference type="PDBsum" id="6W1V"/>
<dbReference type="PDBsum" id="7NHO"/>
<dbReference type="PDBsum" id="7NHP"/>
<dbReference type="PDBsum" id="7NHQ"/>
<dbReference type="PDBsum" id="7RF1"/>
<dbReference type="PDBsum" id="7RF2"/>
<dbReference type="PDBsum" id="7RF3"/>
<dbReference type="PDBsum" id="7RF4"/>
<dbReference type="PDBsum" id="7RF5"/>
<dbReference type="PDBsum" id="7RF6"/>
<dbReference type="PDBsum" id="7RF7"/>
<dbReference type="PDBsum" id="7RF8"/>
<dbReference type="PDBsum" id="7YQ2"/>
<dbReference type="PDBsum" id="7YQ7"/>
<dbReference type="PDBsum" id="8EZ5"/>
<dbReference type="PDBsum" id="8F4C"/>
<dbReference type="PDBsum" id="8F4D"/>
<dbReference type="PDBsum" id="8F4E"/>
<dbReference type="PDBsum" id="8F4F"/>
<dbReference type="PDBsum" id="8F4G"/>
<dbReference type="PDBsum" id="8F4H"/>
<dbReference type="PDBsum" id="8F4I"/>
<dbReference type="PDBsum" id="8F4J"/>
<dbReference type="PDBsum" id="8F4K"/>
<dbReference type="PDBsum" id="9EVX"/>
<dbReference type="EMDB" id="EMD-12335"/>
<dbReference type="EMDB" id="EMD-12336"/>
<dbReference type="EMDB" id="EMD-12337"/>
<dbReference type="EMDB" id="EMD-50019"/>
<dbReference type="SMR" id="Q8DJZ6"/>
<dbReference type="DIP" id="DIP-48494N"/>
<dbReference type="IntAct" id="Q8DJZ6">
    <property type="interactions" value="1"/>
</dbReference>
<dbReference type="STRING" id="197221.gene:10747668"/>
<dbReference type="EnsemblBacteria" id="BAC08627">
    <property type="protein sequence ID" value="BAC08627"/>
    <property type="gene ID" value="BAC08627"/>
</dbReference>
<dbReference type="KEGG" id="tel:tsr1074"/>
<dbReference type="PATRIC" id="fig|197221.4.peg.1129"/>
<dbReference type="eggNOG" id="ENOG5033CII">
    <property type="taxonomic scope" value="Bacteria"/>
</dbReference>
<dbReference type="EvolutionaryTrace" id="Q8DJZ6"/>
<dbReference type="Proteomes" id="UP000000440">
    <property type="component" value="Chromosome"/>
</dbReference>
<dbReference type="GO" id="GO:0009539">
    <property type="term" value="C:photosystem II reaction center"/>
    <property type="evidence" value="ECO:0007669"/>
    <property type="project" value="InterPro"/>
</dbReference>
<dbReference type="GO" id="GO:0031676">
    <property type="term" value="C:plasma membrane-derived thylakoid membrane"/>
    <property type="evidence" value="ECO:0007669"/>
    <property type="project" value="UniProtKB-SubCell"/>
</dbReference>
<dbReference type="GO" id="GO:0015979">
    <property type="term" value="P:photosynthesis"/>
    <property type="evidence" value="ECO:0007669"/>
    <property type="project" value="UniProtKB-UniRule"/>
</dbReference>
<dbReference type="HAMAP" id="MF_01316">
    <property type="entry name" value="PSII_PsbI"/>
    <property type="match status" value="1"/>
</dbReference>
<dbReference type="InterPro" id="IPR003686">
    <property type="entry name" value="PSII_PsbI"/>
</dbReference>
<dbReference type="InterPro" id="IPR037271">
    <property type="entry name" value="PSII_PsbI_sf"/>
</dbReference>
<dbReference type="NCBIfam" id="NF002735">
    <property type="entry name" value="PRK02655.1"/>
    <property type="match status" value="1"/>
</dbReference>
<dbReference type="PANTHER" id="PTHR35772">
    <property type="entry name" value="PHOTOSYSTEM II REACTION CENTER PROTEIN I"/>
    <property type="match status" value="1"/>
</dbReference>
<dbReference type="PANTHER" id="PTHR35772:SF1">
    <property type="entry name" value="PHOTOSYSTEM II REACTION CENTER PROTEIN I"/>
    <property type="match status" value="1"/>
</dbReference>
<dbReference type="Pfam" id="PF02532">
    <property type="entry name" value="PsbI"/>
    <property type="match status" value="1"/>
</dbReference>
<dbReference type="SUPFAM" id="SSF161041">
    <property type="entry name" value="Photosystem II reaction center protein I, PsbI"/>
    <property type="match status" value="1"/>
</dbReference>
<sequence>METLKITVYIVVTFFVLLFVFGFLSGDPARNPKRKDLE</sequence>
<keyword id="KW-0002">3D-structure</keyword>
<keyword id="KW-0903">Direct protein sequencing</keyword>
<keyword id="KW-0291">Formylation</keyword>
<keyword id="KW-0472">Membrane</keyword>
<keyword id="KW-0602">Photosynthesis</keyword>
<keyword id="KW-0604">Photosystem II</keyword>
<keyword id="KW-0674">Reaction center</keyword>
<keyword id="KW-1185">Reference proteome</keyword>
<keyword id="KW-0793">Thylakoid</keyword>
<keyword id="KW-0812">Transmembrane</keyword>
<keyword id="KW-1133">Transmembrane helix</keyword>
<organism>
    <name type="scientific">Thermosynechococcus vestitus (strain NIES-2133 / IAM M-273 / BP-1)</name>
    <dbReference type="NCBI Taxonomy" id="197221"/>
    <lineage>
        <taxon>Bacteria</taxon>
        <taxon>Bacillati</taxon>
        <taxon>Cyanobacteriota</taxon>
        <taxon>Cyanophyceae</taxon>
        <taxon>Acaryochloridales</taxon>
        <taxon>Thermosynechococcaceae</taxon>
        <taxon>Thermosynechococcus</taxon>
    </lineage>
</organism>
<name>PSBI_THEVB</name>
<feature type="chain" id="PRO_0000219660" description="Photosystem II reaction center protein I">
    <location>
        <begin position="1"/>
        <end position="38"/>
    </location>
</feature>
<feature type="topological domain" description="Lumenal" evidence="13 16">
    <location>
        <begin position="1"/>
        <end position="2"/>
    </location>
</feature>
<feature type="transmembrane region" description="Helical" evidence="13 16">
    <location>
        <begin position="3"/>
        <end position="24"/>
    </location>
</feature>
<feature type="topological domain" description="Cytoplasmic" evidence="13 16">
    <location>
        <begin position="25"/>
        <end position="38"/>
    </location>
</feature>
<feature type="modified residue" description="N-formylmethionine" evidence="5 6">
    <location>
        <position position="1"/>
    </location>
</feature>
<feature type="helix" evidence="17">
    <location>
        <begin position="2"/>
        <end position="24"/>
    </location>
</feature>
<feature type="helix" evidence="17">
    <location>
        <begin position="27"/>
        <end position="29"/>
    </location>
</feature>
<feature type="strand" evidence="17">
    <location>
        <begin position="31"/>
        <end position="33"/>
    </location>
</feature>
<accession>Q8DJZ6</accession>
<accession>Q9F1L2</accession>
<comment type="function">
    <text evidence="1 6 7 8 11">One of the components of the core complex of photosystem II (PSII). May be required for formation of PSII dimers but not their subsequent stability (PubMed:21195048). PSII is a light-driven water:plastoquinone oxidoreductase that uses light energy to abstract electrons from H(2)O, generating O(2) and a proton gradient subsequently used for ATP formation. It consists of a core antenna complex that captures photons, and an electron transfer chain that converts photonic excitation into a charge separation.</text>
</comment>
<comment type="cofactor">
    <text evidence="2 3 4 5 6 8 9 10 11 12">PSII binds multiple chlorophylls, carotenoids and specific lipids.</text>
</comment>
<comment type="subunit">
    <text evidence="1 2 3 5 6 7 8 9 10 11 12 13">PSII is composed of 1 copy each of membrane proteins PsbA, PsbB, PsbC, PsbD, PsbE, PsbF, PsbH, PsbI, PsbJ, PsbK, PsbL, PsbM, PsbT, PsbX, PsbY, PsbZ, Psb30/Ycf12, peripheral proteins PsbO, CyanoQ (PsbQ), PsbU, PsbV and a large number of cofactors. It forms dimeric complexes. Part of a photosystem II (PSII) assembly intermediate complex PSII-I; crystallized from a strain deleted of psbJ, it forms monomeric PSII before addition of the oxygen evolving complex. PSII-I includes 3 assembly factors not found in mature PSII (Psb27, Psb28 and Psb34) (PubMed:33846594).</text>
</comment>
<comment type="subcellular location">
    <subcellularLocation>
        <location evidence="1 2 3 4 5 6 7 8 9 10 11 12 13">Cellular thylakoid membrane</location>
        <topology evidence="1 2 3 4 5 6 8 9 10 11 12 13">Single-pass membrane protein</topology>
    </subcellularLocation>
</comment>
<comment type="mass spectrometry"/>
<comment type="mass spectrometry"/>
<comment type="disruption phenotype">
    <text evidence="7">Decreased yields of PSII dimers with increased PSII monomers, slightly slower photoautotrophic growth, about 20% less oxygen evolution. Formed PSII dimers are stable.</text>
</comment>
<comment type="similarity">
    <text evidence="1">Belongs to the PsbI family.</text>
</comment>
<protein>
    <recommendedName>
        <fullName evidence="1">Photosystem II reaction center protein I</fullName>
        <shortName evidence="1">PSII-I</shortName>
    </recommendedName>
    <alternativeName>
        <fullName evidence="1">PSII 4.4 kDa protein</fullName>
    </alternativeName>
</protein>
<proteinExistence type="evidence at protein level"/>
<reference key="1">
    <citation type="submission" date="2000-12" db="EMBL/GenBank/DDBJ databases">
        <title>Cloning and disruption of the psbI gene from thermophilic Thermosynechococcus (formerly Synechococcus) elongatus BP-1.</title>
        <authorList>
            <person name="Katoh H."/>
            <person name="Ikeuchi M."/>
        </authorList>
    </citation>
    <scope>NUCLEOTIDE SEQUENCE [GENOMIC DNA]</scope>
</reference>
<reference key="2">
    <citation type="journal article" date="2002" name="DNA Res.">
        <title>Complete genome structure of the thermophilic cyanobacterium Thermosynechococcus elongatus BP-1.</title>
        <authorList>
            <person name="Nakamura Y."/>
            <person name="Kaneko T."/>
            <person name="Sato S."/>
            <person name="Ikeuchi M."/>
            <person name="Katoh H."/>
            <person name="Sasamoto S."/>
            <person name="Watanabe A."/>
            <person name="Iriguchi M."/>
            <person name="Kawashima K."/>
            <person name="Kimura T."/>
            <person name="Kishida Y."/>
            <person name="Kiyokawa C."/>
            <person name="Kohara M."/>
            <person name="Matsumoto M."/>
            <person name="Matsuno A."/>
            <person name="Nakazaki N."/>
            <person name="Shimpo S."/>
            <person name="Sugimoto M."/>
            <person name="Takeuchi C."/>
            <person name="Yamada M."/>
            <person name="Tabata S."/>
        </authorList>
    </citation>
    <scope>NUCLEOTIDE SEQUENCE [LARGE SCALE GENOMIC DNA]</scope>
    <source>
        <strain>NIES-2133 / IAM M-273 / BP-1</strain>
    </source>
</reference>
<reference key="3">
    <citation type="journal article" date="2007" name="Biochim. Biophys. Acta">
        <title>Ycf12 is a core subunit in the photosystem II complex.</title>
        <authorList>
            <person name="Kashino Y."/>
            <person name="Takahashi T."/>
            <person name="Inoue-Kashino N."/>
            <person name="Ban A."/>
            <person name="Ikeda Y."/>
            <person name="Satoh K."/>
            <person name="Sugiura M."/>
        </authorList>
    </citation>
    <scope>PROTEIN SEQUENCE OF 1-15</scope>
    <scope>COFACTOR</scope>
    <scope>SUBCELLULAR LOCATION</scope>
</reference>
<reference key="4">
    <citation type="journal article" date="2011" name="Biochim. Biophys. Acta">
        <title>Roles of PsbI and PsbM in photosystem II dimer formation and stability studied by deletion mutagenesis and X-ray crystallography.</title>
        <authorList>
            <person name="Kawakami K."/>
            <person name="Umena Y."/>
            <person name="Iwai M."/>
            <person name="Kawabata Y."/>
            <person name="Ikeuchi M."/>
            <person name="Kamiya N."/>
            <person name="Shen J.R."/>
        </authorList>
    </citation>
    <scope>FUNCTION</scope>
    <scope>SUBUNIT</scope>
    <scope>SUBCELLULAR LOCATION</scope>
    <scope>DISRUPTION PHENOTYPE</scope>
</reference>
<reference key="5">
    <citation type="journal article" date="2004" name="Science">
        <title>Architecture of the photosynthetic oxygen-evolving center.</title>
        <authorList>
            <person name="Ferreira K.N."/>
            <person name="Iverson T.M."/>
            <person name="Maghlaoui K."/>
            <person name="Barber J."/>
            <person name="Iwata S."/>
        </authorList>
    </citation>
    <scope>X-RAY CRYSTALLOGRAPHY (3.50 ANGSTROMS) IN PHOTOSYSTEM II</scope>
    <scope>COFACTOR</scope>
    <scope>SUBUNIT</scope>
    <scope>SUBCELLULAR LOCATION</scope>
</reference>
<reference key="6">
    <citation type="journal article" date="2005" name="Nature">
        <title>Towards complete cofactor arrangement in the 3.0 A resolution structure of photosystem II.</title>
        <authorList>
            <person name="Loll B."/>
            <person name="Kern J."/>
            <person name="Saenger W."/>
            <person name="Zouni A."/>
            <person name="Biesiadka J."/>
        </authorList>
    </citation>
    <scope>X-RAY CRYSTALLOGRAPHY (3.00 ANGSTROMS) IN PHOTOSYSTEM II</scope>
    <scope>COFACTOR</scope>
    <scope>SUBUNIT</scope>
    <scope>SUBCELLULAR LOCATION</scope>
    <source>
        <strain>NIES-2133 / IAM M-273 / BP-1</strain>
    </source>
</reference>
<reference key="7">
    <citation type="journal article" date="2009" name="Nat. Struct. Mol. Biol.">
        <title>Cyanobacterial photosystem II at 2.9-A resolution and the role of quinones, lipids, channels and chloride.</title>
        <authorList>
            <person name="Guskov A."/>
            <person name="Kern J."/>
            <person name="Gabdulkhakov A."/>
            <person name="Broser M."/>
            <person name="Zouni A."/>
            <person name="Saenger W."/>
        </authorList>
    </citation>
    <scope>X-RAY CRYSTALLOGRAPHY (2.90 ANGSTROMS) IN PHOTOSYSTEM II</scope>
    <scope>COFACTOR</scope>
    <scope>SUBUNIT</scope>
    <scope>SUBCELLULAR LOCATION</scope>
    <scope>FORMYLATION AT MET-1</scope>
    <scope>MASS SPECTROMETRY</scope>
    <scope>TOPOLOGY</scope>
    <source>
        <strain>NIES-2133 / IAM M-273 / BP-1</strain>
    </source>
</reference>
<reference key="8">
    <citation type="journal article" date="2010" name="J. Biol. Chem.">
        <title>Crystal structure of monomeric photosystem II from Thermosynechococcus elongatus at 3.6 A resolution.</title>
        <authorList>
            <person name="Broser M."/>
            <person name="Gabdulkhakov A."/>
            <person name="Kern J."/>
            <person name="Guskov A."/>
            <person name="Muh F."/>
            <person name="Saenger W."/>
            <person name="Zouni A."/>
        </authorList>
    </citation>
    <scope>X-RAY CRYSTALLOGRAPHY (3.60 ANGSTROMS) IN PHOTOSYSTEM II</scope>
    <scope>FUNCTION</scope>
    <scope>COFACTOR</scope>
    <scope>SUBUNIT</scope>
    <scope>SUBCELLULAR LOCATION</scope>
    <scope>FORMYLATION AT MET-1</scope>
    <scope>MASS SPECTROMETRY</scope>
    <source>
        <strain>NIES-2133 / IAM M-273 / BP-1</strain>
    </source>
</reference>
<reference key="9">
    <citation type="journal article" date="2011" name="J. Biol. Chem.">
        <title>Structural basis of cyanobacterial photosystem II inhibition by the herbicide terbutryn.</title>
        <authorList>
            <person name="Broser M."/>
            <person name="Glockner C."/>
            <person name="Gabdulkhakov A."/>
            <person name="Guskov A."/>
            <person name="Buchta J."/>
            <person name="Kern J."/>
            <person name="Muh F."/>
            <person name="Dau H."/>
            <person name="Saenger W."/>
            <person name="Zouni A."/>
        </authorList>
    </citation>
    <scope>X-RAY CRYSTALLOGRAPHY (3.20 ANGSTROMS) IN PHOTOSYSTEM II</scope>
    <scope>FUNCTION</scope>
    <scope>COFACTOR</scope>
    <scope>SUBUNIT</scope>
    <scope>SUBCELLULAR LOCATION</scope>
</reference>
<reference key="10">
    <citation type="journal article" date="2012" name="Proc. Natl. Acad. Sci. U.S.A.">
        <title>Room temperature femtosecond X-ray diffraction of photosystem II microcrystals.</title>
        <authorList>
            <person name="Kern J."/>
            <person name="Alonso-Mori R."/>
            <person name="Hellmich J."/>
            <person name="Tran R."/>
            <person name="Hattne J."/>
            <person name="Laksmono H."/>
            <person name="Glockner C."/>
            <person name="Echols N."/>
            <person name="Sierra R.G."/>
            <person name="Sellberg J."/>
            <person name="Lassalle-Kaiser B."/>
            <person name="Gildea R.J."/>
            <person name="Glatzel P."/>
            <person name="Grosse-Kunstleve R.W."/>
            <person name="Latimer M.J."/>
            <person name="McQueen T.A."/>
            <person name="DiFiore D."/>
            <person name="Fry A.R."/>
            <person name="Messerschmidt M."/>
            <person name="Miahnahri A."/>
            <person name="Schafer D.W."/>
            <person name="Seibert M.M."/>
            <person name="Sokaras D."/>
            <person name="Weng T.C."/>
            <person name="Zwart P.H."/>
            <person name="White W.E."/>
            <person name="Adams P.D."/>
            <person name="Bogan M.J."/>
            <person name="Boutet S."/>
            <person name="Williams G.J."/>
            <person name="Messinger J."/>
            <person name="Sauter N.K."/>
            <person name="Zouni A."/>
            <person name="Bergmann U."/>
            <person name="Yano J."/>
            <person name="Yachandra V.K."/>
        </authorList>
    </citation>
    <scope>X-RAY CRYSTALLOGRAPHY (6.56 ANGSTROMS) IN PHOTOSYSTEM II</scope>
    <scope>COFACTOR</scope>
    <scope>SUBUNIT</scope>
    <scope>SUBCELLULAR LOCATION</scope>
    <source>
        <strain>NIES-2133 / IAM M-273 / BP-1</strain>
    </source>
</reference>
<reference key="11">
    <citation type="journal article" date="2013" name="Science">
        <title>Simultaneous femtosecond X-ray spectroscopy and diffraction of photosystem II at room temperature.</title>
        <authorList>
            <person name="Kern J."/>
            <person name="Alonso-Mori R."/>
            <person name="Tran R."/>
            <person name="Hattne J."/>
            <person name="Gildea R.J."/>
            <person name="Echols N."/>
            <person name="Glockner C."/>
            <person name="Hellmich J."/>
            <person name="Laksmono H."/>
            <person name="Sierra R.G."/>
            <person name="Lassalle-Kaiser B."/>
            <person name="Koroidov S."/>
            <person name="Lampe A."/>
            <person name="Han G."/>
            <person name="Gul S."/>
            <person name="Difiore D."/>
            <person name="Milathianaki D."/>
            <person name="Fry A.R."/>
            <person name="Miahnahri A."/>
            <person name="Schafer D.W."/>
            <person name="Messerschmidt M."/>
            <person name="Seibert M.M."/>
            <person name="Koglin J.E."/>
            <person name="Sokaras D."/>
            <person name="Weng T.C."/>
            <person name="Sellberg J."/>
            <person name="Latimer M.J."/>
            <person name="Grosse-Kunstleve R.W."/>
            <person name="Zwart P.H."/>
            <person name="White W.E."/>
            <person name="Glatzel P."/>
            <person name="Adams P.D."/>
            <person name="Bogan M.J."/>
            <person name="Williams G.J."/>
            <person name="Boutet S."/>
            <person name="Messinger J."/>
            <person name="Zouni A."/>
            <person name="Sauter N.K."/>
            <person name="Yachandra V.K."/>
            <person name="Bergmann U."/>
            <person name="Yano J."/>
        </authorList>
    </citation>
    <scope>X-RAY CRYSTALLOGRAPHY (5.70 ANGSTROMS) IN PHOTOSYSTEM II</scope>
    <scope>COFACTOR</scope>
    <scope>SUBUNIT</scope>
    <scope>SUBCELLULAR LOCATION</scope>
    <source>
        <strain>NIES-2133 / IAM M-273 / BP-1</strain>
    </source>
</reference>
<reference key="12">
    <citation type="journal article" date="2014" name="Nature">
        <title>Serial time-resolved crystallography of photosystem II using a femtosecond X-ray laser.</title>
        <authorList>
            <person name="Kupitz C."/>
            <person name="Basu S."/>
            <person name="Grotjohann I."/>
            <person name="Fromme R."/>
            <person name="Zatsepin N.A."/>
            <person name="Rendek K.N."/>
            <person name="Hunter M.S."/>
            <person name="Shoeman R.L."/>
            <person name="White T.A."/>
            <person name="Wang D."/>
            <person name="James D."/>
            <person name="Yang J.H."/>
            <person name="Cobb D.E."/>
            <person name="Reeder B."/>
            <person name="Sierra R.G."/>
            <person name="Liu H."/>
            <person name="Barty A."/>
            <person name="Aquila A.L."/>
            <person name="Deponte D."/>
            <person name="Kirian R.A."/>
            <person name="Bari S."/>
            <person name="Bergkamp J.J."/>
            <person name="Beyerlein K.R."/>
            <person name="Bogan M.J."/>
            <person name="Caleman C."/>
            <person name="Chao T.C."/>
            <person name="Conrad C.E."/>
            <person name="Davis K.M."/>
            <person name="Fleckenstein H."/>
            <person name="Galli L."/>
            <person name="Hau-Riege S.P."/>
            <person name="Kassemeyer S."/>
            <person name="Laksmono H."/>
            <person name="Liang M."/>
            <person name="Lomb L."/>
            <person name="Marchesini S."/>
            <person name="Martin A.V."/>
            <person name="Messerschmidt M."/>
            <person name="Milathianaki D."/>
            <person name="Nass K."/>
            <person name="Ros A."/>
            <person name="Roy-Chowdhury S."/>
            <person name="Schmidt K."/>
            <person name="Seibert M."/>
            <person name="Steinbrener J."/>
            <person name="Stellato F."/>
            <person name="Yan L."/>
            <person name="Yoon C."/>
            <person name="Moore T.A."/>
            <person name="Moore A.L."/>
            <person name="Pushkar Y."/>
            <person name="Williams G.J."/>
            <person name="Boutet S."/>
            <person name="Doak R.B."/>
            <person name="Weierstall U."/>
            <person name="Frank M."/>
            <person name="Chapman H.N."/>
            <person name="Spence J.C."/>
            <person name="Fromme P."/>
        </authorList>
    </citation>
    <scope>X-RAY CRYSTALLOGRAPHY (5.00 ANGSTROMS) IN PHOTOSYSTEM II</scope>
    <scope>COFACTOR</scope>
    <scope>SUBUNIT</scope>
    <scope>SUBCELLULAR LOCATION</scope>
    <source>
        <strain>NIES-2133 / IAM M-273 / BP-1</strain>
    </source>
</reference>
<reference key="13">
    <citation type="journal article" date="2014" name="Nat. Commun.">
        <title>Taking snapshots of photosynthetic water oxidation using femtosecond X-ray diffraction and spectroscopy.</title>
        <authorList>
            <person name="Kern J."/>
            <person name="Tran R."/>
            <person name="Alonso-Mori R."/>
            <person name="Koroidov S."/>
            <person name="Echols N."/>
            <person name="Hattne J."/>
            <person name="Ibrahim M."/>
            <person name="Gul S."/>
            <person name="Laksmono H."/>
            <person name="Sierra R.G."/>
            <person name="Gildea R.J."/>
            <person name="Han G."/>
            <person name="Hellmich J."/>
            <person name="Lassalle-Kaiser B."/>
            <person name="Chatterjee R."/>
            <person name="Brewster A.S."/>
            <person name="Stan C.A."/>
            <person name="Gloeckner C."/>
            <person name="Lampe A."/>
            <person name="DiFiore D."/>
            <person name="Milathianaki D."/>
            <person name="Fry A.R."/>
            <person name="Seibert M.M."/>
            <person name="Koglin J.E."/>
            <person name="Gallo E."/>
            <person name="Uhlig J."/>
            <person name="Sokaras D."/>
            <person name="Weng T.C."/>
            <person name="Zwart P.H."/>
            <person name="Skinner D.E."/>
            <person name="Bogan M.J."/>
            <person name="Messerschmidt M."/>
            <person name="Glatzel P."/>
            <person name="Williams G.J."/>
            <person name="Boutet S."/>
            <person name="Adams P.D."/>
            <person name="Zouni A."/>
            <person name="Messinger J."/>
            <person name="Sauter N.K."/>
            <person name="Bergmann U."/>
            <person name="Yano J."/>
            <person name="Yachandra V.K."/>
        </authorList>
    </citation>
    <scope>X-RAY CRYSTALLOGRAPHY (4.50 ANGSTROMS) IN PHOTOSYSTEM II</scope>
    <scope>FUNCTION</scope>
    <scope>COFACTOR</scope>
    <scope>SUBUNIT</scope>
    <scope>SUBCELLULAR LOCATION</scope>
    <source>
        <strain>NIES-2133 / IAM M-273 / BP-1</strain>
    </source>
</reference>
<reference evidence="14 15 16" key="14">
    <citation type="journal article" date="2021" name="Nat. Plants">
        <title>Structural insights into photosystem II assembly.</title>
        <authorList>
            <person name="Zabret J."/>
            <person name="Bohn S."/>
            <person name="Schuller S.K."/>
            <person name="Arnolds O."/>
            <person name="Moller M."/>
            <person name="Meier-Credo J."/>
            <person name="Liauw P."/>
            <person name="Chan A."/>
            <person name="Tajkhorshid E."/>
            <person name="Langer J.D."/>
            <person name="Stoll R."/>
            <person name="Krieger-Liszkay A."/>
            <person name="Engel B.D."/>
            <person name="Rudack T."/>
            <person name="Schuller J.M."/>
            <person name="Nowaczyk M.M."/>
        </authorList>
    </citation>
    <scope>STRUCTURE BY ELECTRON MICROSCOPY (2.68 ANGSTROMS) IN PSII-I ASSEMBLY COMPLEX</scope>
    <scope>SUBUNIT</scope>
    <scope>SUBCELLULAR LOCATION</scope>
    <scope>TOPOLOGY</scope>
    <source>
        <strain>NIES-2133 / IAM M-273 / BP-1</strain>
    </source>
</reference>